<comment type="function">
    <text evidence="1">Cell wall formation. Adds enolpyruvyl to UDP-N-acetylglucosamine.</text>
</comment>
<comment type="catalytic activity">
    <reaction evidence="1">
        <text>phosphoenolpyruvate + UDP-N-acetyl-alpha-D-glucosamine = UDP-N-acetyl-3-O-(1-carboxyvinyl)-alpha-D-glucosamine + phosphate</text>
        <dbReference type="Rhea" id="RHEA:18681"/>
        <dbReference type="ChEBI" id="CHEBI:43474"/>
        <dbReference type="ChEBI" id="CHEBI:57705"/>
        <dbReference type="ChEBI" id="CHEBI:58702"/>
        <dbReference type="ChEBI" id="CHEBI:68483"/>
        <dbReference type="EC" id="2.5.1.7"/>
    </reaction>
</comment>
<comment type="pathway">
    <text evidence="1">Cell wall biogenesis; peptidoglycan biosynthesis.</text>
</comment>
<comment type="subcellular location">
    <subcellularLocation>
        <location evidence="1">Cytoplasm</location>
    </subcellularLocation>
</comment>
<comment type="similarity">
    <text evidence="1">Belongs to the EPSP synthase family. MurA subfamily.</text>
</comment>
<dbReference type="EC" id="2.5.1.7" evidence="1"/>
<dbReference type="EMBL" id="CP001132">
    <property type="protein sequence ID" value="ACH84842.1"/>
    <property type="molecule type" value="Genomic_DNA"/>
</dbReference>
<dbReference type="RefSeq" id="WP_009565749.1">
    <property type="nucleotide sequence ID" value="NC_011206.1"/>
</dbReference>
<dbReference type="SMR" id="B5EQE5"/>
<dbReference type="GeneID" id="65282041"/>
<dbReference type="KEGG" id="afe:Lferr_2648"/>
<dbReference type="eggNOG" id="COG0766">
    <property type="taxonomic scope" value="Bacteria"/>
</dbReference>
<dbReference type="HOGENOM" id="CLU_027387_0_0_6"/>
<dbReference type="UniPathway" id="UPA00219"/>
<dbReference type="GO" id="GO:0005737">
    <property type="term" value="C:cytoplasm"/>
    <property type="evidence" value="ECO:0007669"/>
    <property type="project" value="UniProtKB-SubCell"/>
</dbReference>
<dbReference type="GO" id="GO:0008760">
    <property type="term" value="F:UDP-N-acetylglucosamine 1-carboxyvinyltransferase activity"/>
    <property type="evidence" value="ECO:0007669"/>
    <property type="project" value="UniProtKB-UniRule"/>
</dbReference>
<dbReference type="GO" id="GO:0051301">
    <property type="term" value="P:cell division"/>
    <property type="evidence" value="ECO:0007669"/>
    <property type="project" value="UniProtKB-KW"/>
</dbReference>
<dbReference type="GO" id="GO:0071555">
    <property type="term" value="P:cell wall organization"/>
    <property type="evidence" value="ECO:0007669"/>
    <property type="project" value="UniProtKB-KW"/>
</dbReference>
<dbReference type="GO" id="GO:0009252">
    <property type="term" value="P:peptidoglycan biosynthetic process"/>
    <property type="evidence" value="ECO:0007669"/>
    <property type="project" value="UniProtKB-UniRule"/>
</dbReference>
<dbReference type="GO" id="GO:0008360">
    <property type="term" value="P:regulation of cell shape"/>
    <property type="evidence" value="ECO:0007669"/>
    <property type="project" value="UniProtKB-KW"/>
</dbReference>
<dbReference type="GO" id="GO:0019277">
    <property type="term" value="P:UDP-N-acetylgalactosamine biosynthetic process"/>
    <property type="evidence" value="ECO:0007669"/>
    <property type="project" value="InterPro"/>
</dbReference>
<dbReference type="CDD" id="cd01555">
    <property type="entry name" value="UdpNAET"/>
    <property type="match status" value="1"/>
</dbReference>
<dbReference type="FunFam" id="3.65.10.10:FF:000002">
    <property type="entry name" value="UDP-N-acetylglucosamine 1-carboxyvinyltransferase"/>
    <property type="match status" value="1"/>
</dbReference>
<dbReference type="Gene3D" id="3.65.10.10">
    <property type="entry name" value="Enolpyruvate transferase domain"/>
    <property type="match status" value="2"/>
</dbReference>
<dbReference type="HAMAP" id="MF_00111">
    <property type="entry name" value="MurA"/>
    <property type="match status" value="1"/>
</dbReference>
<dbReference type="InterPro" id="IPR001986">
    <property type="entry name" value="Enolpyruvate_Tfrase_dom"/>
</dbReference>
<dbReference type="InterPro" id="IPR036968">
    <property type="entry name" value="Enolpyruvate_Tfrase_sf"/>
</dbReference>
<dbReference type="InterPro" id="IPR050068">
    <property type="entry name" value="MurA_subfamily"/>
</dbReference>
<dbReference type="InterPro" id="IPR013792">
    <property type="entry name" value="RNA3'P_cycl/enolpyr_Trfase_a/b"/>
</dbReference>
<dbReference type="InterPro" id="IPR005750">
    <property type="entry name" value="UDP_GlcNAc_COvinyl_MurA"/>
</dbReference>
<dbReference type="NCBIfam" id="TIGR01072">
    <property type="entry name" value="murA"/>
    <property type="match status" value="1"/>
</dbReference>
<dbReference type="NCBIfam" id="NF006873">
    <property type="entry name" value="PRK09369.1"/>
    <property type="match status" value="1"/>
</dbReference>
<dbReference type="PANTHER" id="PTHR43783">
    <property type="entry name" value="UDP-N-ACETYLGLUCOSAMINE 1-CARBOXYVINYLTRANSFERASE"/>
    <property type="match status" value="1"/>
</dbReference>
<dbReference type="PANTHER" id="PTHR43783:SF1">
    <property type="entry name" value="UDP-N-ACETYLGLUCOSAMINE 1-CARBOXYVINYLTRANSFERASE"/>
    <property type="match status" value="1"/>
</dbReference>
<dbReference type="Pfam" id="PF00275">
    <property type="entry name" value="EPSP_synthase"/>
    <property type="match status" value="1"/>
</dbReference>
<dbReference type="SUPFAM" id="SSF55205">
    <property type="entry name" value="EPT/RTPC-like"/>
    <property type="match status" value="1"/>
</dbReference>
<sequence>MDKLLLRGNGPLRGELRISGAKNAALPCLAATLLAREPVRLCNIPHLRDITTTLELLSTLGARVLVDGQLGIEVDPRPVHSVVAPYELVKTMRASILVLGPLLARHGSAEVSLPGGCAIGSRPVSVHLSGLQALGAEITVEDGFVKAQAARLRGTRIVMEMVSVTGTENLLMAATLAEGRTILENAAREPEIVDLARCLSAMGARISGAGTSVIEIEGVAELHGAEHSVVPDRIETGTYLVAAAMTGGDICLKRTDAGLLESVLLKLKEAGAEVTTGADTIRIRMKRRPRAVDVRTAPFPAFPTDMQAQFMAMNCIAEGSSVVTETIFENRFMHVSELQRLGADINADGKTAVVRGVQRLRGAPVMATDLRASASLVLAGLVAEGETLIDRIYHLDRGYEVIEEKLSALGADIRRISNTRSVA</sequence>
<accession>B5EQE5</accession>
<name>MURA_ACIF5</name>
<reference key="1">
    <citation type="submission" date="2008-08" db="EMBL/GenBank/DDBJ databases">
        <title>Complete sequence of Acidithiobacillus ferrooxidans ATCC 53993.</title>
        <authorList>
            <person name="Lucas S."/>
            <person name="Copeland A."/>
            <person name="Lapidus A."/>
            <person name="Glavina del Rio T."/>
            <person name="Dalin E."/>
            <person name="Tice H."/>
            <person name="Bruce D."/>
            <person name="Goodwin L."/>
            <person name="Pitluck S."/>
            <person name="Sims D."/>
            <person name="Brettin T."/>
            <person name="Detter J.C."/>
            <person name="Han C."/>
            <person name="Kuske C.R."/>
            <person name="Larimer F."/>
            <person name="Land M."/>
            <person name="Hauser L."/>
            <person name="Kyrpides N."/>
            <person name="Lykidis A."/>
            <person name="Borole A.P."/>
        </authorList>
    </citation>
    <scope>NUCLEOTIDE SEQUENCE [LARGE SCALE GENOMIC DNA]</scope>
    <source>
        <strain>ATCC 53993 / BNL-5-31</strain>
    </source>
</reference>
<gene>
    <name evidence="1" type="primary">murA</name>
    <name type="ordered locus">Lferr_2648</name>
</gene>
<feature type="chain" id="PRO_1000094665" description="UDP-N-acetylglucosamine 1-carboxyvinyltransferase">
    <location>
        <begin position="1"/>
        <end position="423"/>
    </location>
</feature>
<feature type="active site" description="Proton donor" evidence="1">
    <location>
        <position position="117"/>
    </location>
</feature>
<feature type="binding site" evidence="1">
    <location>
        <begin position="22"/>
        <end position="23"/>
    </location>
    <ligand>
        <name>phosphoenolpyruvate</name>
        <dbReference type="ChEBI" id="CHEBI:58702"/>
    </ligand>
</feature>
<feature type="binding site" evidence="1">
    <location>
        <position position="93"/>
    </location>
    <ligand>
        <name>UDP-N-acetyl-alpha-D-glucosamine</name>
        <dbReference type="ChEBI" id="CHEBI:57705"/>
    </ligand>
</feature>
<feature type="binding site" evidence="1">
    <location>
        <position position="305"/>
    </location>
    <ligand>
        <name>UDP-N-acetyl-alpha-D-glucosamine</name>
        <dbReference type="ChEBI" id="CHEBI:57705"/>
    </ligand>
</feature>
<feature type="binding site" evidence="1">
    <location>
        <position position="327"/>
    </location>
    <ligand>
        <name>UDP-N-acetyl-alpha-D-glucosamine</name>
        <dbReference type="ChEBI" id="CHEBI:57705"/>
    </ligand>
</feature>
<feature type="modified residue" description="2-(S-cysteinyl)pyruvic acid O-phosphothioketal" evidence="1">
    <location>
        <position position="117"/>
    </location>
</feature>
<proteinExistence type="inferred from homology"/>
<evidence type="ECO:0000255" key="1">
    <source>
        <dbReference type="HAMAP-Rule" id="MF_00111"/>
    </source>
</evidence>
<protein>
    <recommendedName>
        <fullName evidence="1">UDP-N-acetylglucosamine 1-carboxyvinyltransferase</fullName>
        <ecNumber evidence="1">2.5.1.7</ecNumber>
    </recommendedName>
    <alternativeName>
        <fullName evidence="1">Enoylpyruvate transferase</fullName>
    </alternativeName>
    <alternativeName>
        <fullName evidence="1">UDP-N-acetylglucosamine enolpyruvyl transferase</fullName>
        <shortName evidence="1">EPT</shortName>
    </alternativeName>
</protein>
<organism>
    <name type="scientific">Acidithiobacillus ferrooxidans (strain ATCC 53993 / BNL-5-31)</name>
    <name type="common">Leptospirillum ferrooxidans (ATCC 53993)</name>
    <dbReference type="NCBI Taxonomy" id="380394"/>
    <lineage>
        <taxon>Bacteria</taxon>
        <taxon>Pseudomonadati</taxon>
        <taxon>Pseudomonadota</taxon>
        <taxon>Acidithiobacillia</taxon>
        <taxon>Acidithiobacillales</taxon>
        <taxon>Acidithiobacillaceae</taxon>
        <taxon>Acidithiobacillus</taxon>
    </lineage>
</organism>
<keyword id="KW-0131">Cell cycle</keyword>
<keyword id="KW-0132">Cell division</keyword>
<keyword id="KW-0133">Cell shape</keyword>
<keyword id="KW-0961">Cell wall biogenesis/degradation</keyword>
<keyword id="KW-0963">Cytoplasm</keyword>
<keyword id="KW-0573">Peptidoglycan synthesis</keyword>
<keyword id="KW-0670">Pyruvate</keyword>
<keyword id="KW-0808">Transferase</keyword>